<evidence type="ECO:0000255" key="1">
    <source>
        <dbReference type="HAMAP-Rule" id="MF_00073"/>
    </source>
</evidence>
<proteinExistence type="inferred from homology"/>
<organism>
    <name type="scientific">Nitrosomonas europaea (strain ATCC 19718 / CIP 103999 / KCTC 2705 / NBRC 14298)</name>
    <dbReference type="NCBI Taxonomy" id="228410"/>
    <lineage>
        <taxon>Bacteria</taxon>
        <taxon>Pseudomonadati</taxon>
        <taxon>Pseudomonadota</taxon>
        <taxon>Betaproteobacteria</taxon>
        <taxon>Nitrosomonadales</taxon>
        <taxon>Nitrosomonadaceae</taxon>
        <taxon>Nitrosomonas</taxon>
    </lineage>
</organism>
<feature type="chain" id="PRO_0000176560" description="Transcription antitermination protein NusB">
    <location>
        <begin position="1"/>
        <end position="167"/>
    </location>
</feature>
<sequence>MMSTETVPPVKRVQGHKGYKNRRRLSRELALQGIYQWQVTGGNARDIGMQLQQVSFFSKADGPYFSDLLQGVLEHAADLQTQIQPHLDRQIAELSPVECSILLIGTYEMVYRPEIPCRAIINEAIELAKSYGGTDGHKYVNGVLDKLATRLRAVELQHPPARNKDSG</sequence>
<dbReference type="EMBL" id="AL954747">
    <property type="protein sequence ID" value="CAD86470.1"/>
    <property type="molecule type" value="Genomic_DNA"/>
</dbReference>
<dbReference type="RefSeq" id="WP_011113011.1">
    <property type="nucleotide sequence ID" value="NC_004757.1"/>
</dbReference>
<dbReference type="SMR" id="Q82S07"/>
<dbReference type="STRING" id="228410.NE2558"/>
<dbReference type="GeneID" id="87105686"/>
<dbReference type="KEGG" id="neu:NE2558"/>
<dbReference type="eggNOG" id="COG0781">
    <property type="taxonomic scope" value="Bacteria"/>
</dbReference>
<dbReference type="HOGENOM" id="CLU_087843_4_1_4"/>
<dbReference type="OrthoDB" id="9789556at2"/>
<dbReference type="PhylomeDB" id="Q82S07"/>
<dbReference type="Proteomes" id="UP000001416">
    <property type="component" value="Chromosome"/>
</dbReference>
<dbReference type="GO" id="GO:0005829">
    <property type="term" value="C:cytosol"/>
    <property type="evidence" value="ECO:0007669"/>
    <property type="project" value="TreeGrafter"/>
</dbReference>
<dbReference type="GO" id="GO:0003723">
    <property type="term" value="F:RNA binding"/>
    <property type="evidence" value="ECO:0007669"/>
    <property type="project" value="UniProtKB-UniRule"/>
</dbReference>
<dbReference type="GO" id="GO:0006353">
    <property type="term" value="P:DNA-templated transcription termination"/>
    <property type="evidence" value="ECO:0007669"/>
    <property type="project" value="UniProtKB-UniRule"/>
</dbReference>
<dbReference type="GO" id="GO:0031564">
    <property type="term" value="P:transcription antitermination"/>
    <property type="evidence" value="ECO:0007669"/>
    <property type="project" value="UniProtKB-KW"/>
</dbReference>
<dbReference type="Gene3D" id="1.10.940.10">
    <property type="entry name" value="NusB-like"/>
    <property type="match status" value="1"/>
</dbReference>
<dbReference type="HAMAP" id="MF_00073">
    <property type="entry name" value="NusB"/>
    <property type="match status" value="1"/>
</dbReference>
<dbReference type="InterPro" id="IPR035926">
    <property type="entry name" value="NusB-like_sf"/>
</dbReference>
<dbReference type="InterPro" id="IPR011605">
    <property type="entry name" value="NusB_fam"/>
</dbReference>
<dbReference type="InterPro" id="IPR006027">
    <property type="entry name" value="NusB_RsmB_TIM44"/>
</dbReference>
<dbReference type="NCBIfam" id="TIGR01951">
    <property type="entry name" value="nusB"/>
    <property type="match status" value="1"/>
</dbReference>
<dbReference type="PANTHER" id="PTHR11078:SF3">
    <property type="entry name" value="ANTITERMINATION NUSB DOMAIN-CONTAINING PROTEIN"/>
    <property type="match status" value="1"/>
</dbReference>
<dbReference type="PANTHER" id="PTHR11078">
    <property type="entry name" value="N UTILIZATION SUBSTANCE PROTEIN B-RELATED"/>
    <property type="match status" value="1"/>
</dbReference>
<dbReference type="Pfam" id="PF01029">
    <property type="entry name" value="NusB"/>
    <property type="match status" value="1"/>
</dbReference>
<dbReference type="SUPFAM" id="SSF48013">
    <property type="entry name" value="NusB-like"/>
    <property type="match status" value="1"/>
</dbReference>
<protein>
    <recommendedName>
        <fullName evidence="1">Transcription antitermination protein NusB</fullName>
    </recommendedName>
    <alternativeName>
        <fullName evidence="1">Antitermination factor NusB</fullName>
    </alternativeName>
</protein>
<name>NUSB_NITEU</name>
<keyword id="KW-1185">Reference proteome</keyword>
<keyword id="KW-0694">RNA-binding</keyword>
<keyword id="KW-0804">Transcription</keyword>
<keyword id="KW-0889">Transcription antitermination</keyword>
<keyword id="KW-0805">Transcription regulation</keyword>
<comment type="function">
    <text evidence="1">Involved in transcription antitermination. Required for transcription of ribosomal RNA (rRNA) genes. Binds specifically to the boxA antiterminator sequence of the ribosomal RNA (rrn) operons.</text>
</comment>
<comment type="similarity">
    <text evidence="1">Belongs to the NusB family.</text>
</comment>
<accession>Q82S07</accession>
<reference key="1">
    <citation type="journal article" date="2003" name="J. Bacteriol.">
        <title>Complete genome sequence of the ammonia-oxidizing bacterium and obligate chemolithoautotroph Nitrosomonas europaea.</title>
        <authorList>
            <person name="Chain P."/>
            <person name="Lamerdin J.E."/>
            <person name="Larimer F.W."/>
            <person name="Regala W."/>
            <person name="Lao V."/>
            <person name="Land M.L."/>
            <person name="Hauser L."/>
            <person name="Hooper A.B."/>
            <person name="Klotz M.G."/>
            <person name="Norton J."/>
            <person name="Sayavedra-Soto L.A."/>
            <person name="Arciero D.M."/>
            <person name="Hommes N.G."/>
            <person name="Whittaker M.M."/>
            <person name="Arp D.J."/>
        </authorList>
    </citation>
    <scope>NUCLEOTIDE SEQUENCE [LARGE SCALE GENOMIC DNA]</scope>
    <source>
        <strain>ATCC 19718 / CIP 103999 / KCTC 2705 / NBRC 14298</strain>
    </source>
</reference>
<gene>
    <name evidence="1" type="primary">nusB</name>
    <name type="ordered locus">NE2558</name>
</gene>